<name>VF307_IIV3</name>
<proteinExistence type="inferred from homology"/>
<reference key="1">
    <citation type="journal article" date="2006" name="J. Virol.">
        <title>Genome of invertebrate iridescent virus type 3 (mosquito iridescent virus).</title>
        <authorList>
            <person name="Delhon G."/>
            <person name="Tulman E.R."/>
            <person name="Afonso C.L."/>
            <person name="Lu Z."/>
            <person name="Becnel J.J."/>
            <person name="Moser B.A."/>
            <person name="Kutish G.F."/>
            <person name="Rock D.L."/>
        </authorList>
    </citation>
    <scope>NUCLEOTIDE SEQUENCE [LARGE SCALE GENOMIC DNA]</scope>
</reference>
<protein>
    <recommendedName>
        <fullName>Uncharacterized protein 033L</fullName>
    </recommendedName>
</protein>
<evidence type="ECO:0000255" key="1"/>
<evidence type="ECO:0000305" key="2"/>
<accession>Q197C7</accession>
<organism>
    <name type="scientific">Invertebrate iridescent virus 3</name>
    <name type="common">IIV-3</name>
    <name type="synonym">Mosquito iridescent virus</name>
    <dbReference type="NCBI Taxonomy" id="345201"/>
    <lineage>
        <taxon>Viruses</taxon>
        <taxon>Varidnaviria</taxon>
        <taxon>Bamfordvirae</taxon>
        <taxon>Nucleocytoviricota</taxon>
        <taxon>Megaviricetes</taxon>
        <taxon>Pimascovirales</taxon>
        <taxon>Iridoviridae</taxon>
        <taxon>Betairidovirinae</taxon>
        <taxon>Chloriridovirus</taxon>
    </lineage>
</organism>
<comment type="subcellular location">
    <subcellularLocation>
        <location evidence="2">Membrane</location>
        <topology evidence="2">Single-pass membrane protein</topology>
    </subcellularLocation>
</comment>
<comment type="similarity">
    <text evidence="2">Belongs to the IIV-6 307L family.</text>
</comment>
<sequence>MVKSTTRKRTTLDEWDDVWLYLLVFGCLSVLVLVLVHRKLTRQKGTWSRGLRLDHLYRYSPADPITTGGGGKTTDSRGEVECRRFLETTFRVPFPKARPAFLRNPITGNNLEIDCFNPTIGLGVEYNGKQHYAFNDFFHRNKEAAMNQQYRDELKRRMCHENGVVLIEVPYTIKLSDIGPFLYARLKNLGFIAP</sequence>
<feature type="chain" id="PRO_0000377782" description="Uncharacterized protein 033L">
    <location>
        <begin position="1"/>
        <end position="194"/>
    </location>
</feature>
<feature type="transmembrane region" description="Helical" evidence="1">
    <location>
        <begin position="17"/>
        <end position="37"/>
    </location>
</feature>
<organismHost>
    <name type="scientific">Aedes vexans</name>
    <name type="common">Inland floodwater mosquito</name>
    <name type="synonym">Culex vexans</name>
    <dbReference type="NCBI Taxonomy" id="7163"/>
</organismHost>
<organismHost>
    <name type="scientific">Culex territans</name>
    <dbReference type="NCBI Taxonomy" id="42431"/>
</organismHost>
<organismHost>
    <name type="scientific">Culiseta annulata</name>
    <dbReference type="NCBI Taxonomy" id="332058"/>
</organismHost>
<organismHost>
    <name type="scientific">Ochlerotatus sollicitans</name>
    <name type="common">eastern saltmarsh mosquito</name>
    <dbReference type="NCBI Taxonomy" id="310513"/>
</organismHost>
<organismHost>
    <name type="scientific">Ochlerotatus taeniorhynchus</name>
    <name type="common">Black salt marsh mosquito</name>
    <name type="synonym">Aedes taeniorhynchus</name>
    <dbReference type="NCBI Taxonomy" id="329105"/>
</organismHost>
<organismHost>
    <name type="scientific">Psorophora ferox</name>
    <dbReference type="NCBI Taxonomy" id="7183"/>
</organismHost>
<keyword id="KW-0472">Membrane</keyword>
<keyword id="KW-1185">Reference proteome</keyword>
<keyword id="KW-0812">Transmembrane</keyword>
<keyword id="KW-1133">Transmembrane helix</keyword>
<dbReference type="EMBL" id="DQ643392">
    <property type="protein sequence ID" value="ABF82063.1"/>
    <property type="molecule type" value="Genomic_DNA"/>
</dbReference>
<dbReference type="RefSeq" id="YP_654605.1">
    <property type="nucleotide sequence ID" value="NC_008187.1"/>
</dbReference>
<dbReference type="KEGG" id="vg:4156343"/>
<dbReference type="OrthoDB" id="14596at10239"/>
<dbReference type="Proteomes" id="UP000001358">
    <property type="component" value="Genome"/>
</dbReference>
<dbReference type="GO" id="GO:0016020">
    <property type="term" value="C:membrane"/>
    <property type="evidence" value="ECO:0007669"/>
    <property type="project" value="UniProtKB-SubCell"/>
</dbReference>
<dbReference type="Gene3D" id="3.40.960.10">
    <property type="entry name" value="VSR Endonuclease"/>
    <property type="match status" value="1"/>
</dbReference>
<gene>
    <name type="ORF">IIV3-033L</name>
</gene>